<dbReference type="EC" id="2.7.1.24" evidence="1"/>
<dbReference type="EMBL" id="AE004969">
    <property type="protein sequence ID" value="AAW90296.2"/>
    <property type="molecule type" value="Genomic_DNA"/>
</dbReference>
<dbReference type="RefSeq" id="WP_003689816.1">
    <property type="nucleotide sequence ID" value="NC_002946.2"/>
</dbReference>
<dbReference type="SMR" id="Q5F691"/>
<dbReference type="STRING" id="242231.NGO_1671"/>
<dbReference type="GeneID" id="66753951"/>
<dbReference type="KEGG" id="ngo:NGO_1671"/>
<dbReference type="HOGENOM" id="CLU_057180_1_2_4"/>
<dbReference type="UniPathway" id="UPA00241">
    <property type="reaction ID" value="UER00356"/>
</dbReference>
<dbReference type="Proteomes" id="UP000000535">
    <property type="component" value="Chromosome"/>
</dbReference>
<dbReference type="GO" id="GO:0005737">
    <property type="term" value="C:cytoplasm"/>
    <property type="evidence" value="ECO:0007669"/>
    <property type="project" value="UniProtKB-SubCell"/>
</dbReference>
<dbReference type="GO" id="GO:0005524">
    <property type="term" value="F:ATP binding"/>
    <property type="evidence" value="ECO:0007669"/>
    <property type="project" value="UniProtKB-UniRule"/>
</dbReference>
<dbReference type="GO" id="GO:0004140">
    <property type="term" value="F:dephospho-CoA kinase activity"/>
    <property type="evidence" value="ECO:0007669"/>
    <property type="project" value="UniProtKB-UniRule"/>
</dbReference>
<dbReference type="GO" id="GO:0015937">
    <property type="term" value="P:coenzyme A biosynthetic process"/>
    <property type="evidence" value="ECO:0007669"/>
    <property type="project" value="UniProtKB-UniRule"/>
</dbReference>
<dbReference type="CDD" id="cd02022">
    <property type="entry name" value="DPCK"/>
    <property type="match status" value="1"/>
</dbReference>
<dbReference type="FunFam" id="3.40.50.300:FF:002756">
    <property type="entry name" value="Dephospho-CoA kinase"/>
    <property type="match status" value="1"/>
</dbReference>
<dbReference type="Gene3D" id="3.40.50.300">
    <property type="entry name" value="P-loop containing nucleotide triphosphate hydrolases"/>
    <property type="match status" value="1"/>
</dbReference>
<dbReference type="HAMAP" id="MF_00376">
    <property type="entry name" value="Dephospho_CoA_kinase"/>
    <property type="match status" value="1"/>
</dbReference>
<dbReference type="InterPro" id="IPR001977">
    <property type="entry name" value="Depp_CoAkinase"/>
</dbReference>
<dbReference type="InterPro" id="IPR027417">
    <property type="entry name" value="P-loop_NTPase"/>
</dbReference>
<dbReference type="NCBIfam" id="TIGR00152">
    <property type="entry name" value="dephospho-CoA kinase"/>
    <property type="match status" value="1"/>
</dbReference>
<dbReference type="PANTHER" id="PTHR10695:SF46">
    <property type="entry name" value="BIFUNCTIONAL COENZYME A SYNTHASE-RELATED"/>
    <property type="match status" value="1"/>
</dbReference>
<dbReference type="PANTHER" id="PTHR10695">
    <property type="entry name" value="DEPHOSPHO-COA KINASE-RELATED"/>
    <property type="match status" value="1"/>
</dbReference>
<dbReference type="Pfam" id="PF01121">
    <property type="entry name" value="CoaE"/>
    <property type="match status" value="1"/>
</dbReference>
<dbReference type="SUPFAM" id="SSF52540">
    <property type="entry name" value="P-loop containing nucleoside triphosphate hydrolases"/>
    <property type="match status" value="1"/>
</dbReference>
<dbReference type="PROSITE" id="PS51219">
    <property type="entry name" value="DPCK"/>
    <property type="match status" value="1"/>
</dbReference>
<protein>
    <recommendedName>
        <fullName evidence="1">Dephospho-CoA kinase</fullName>
        <ecNumber evidence="1">2.7.1.24</ecNumber>
    </recommendedName>
    <alternativeName>
        <fullName evidence="1">Dephosphocoenzyme A kinase</fullName>
    </alternativeName>
</protein>
<keyword id="KW-0067">ATP-binding</keyword>
<keyword id="KW-0173">Coenzyme A biosynthesis</keyword>
<keyword id="KW-0963">Cytoplasm</keyword>
<keyword id="KW-0418">Kinase</keyword>
<keyword id="KW-0547">Nucleotide-binding</keyword>
<keyword id="KW-1185">Reference proteome</keyword>
<keyword id="KW-0808">Transferase</keyword>
<organism>
    <name type="scientific">Neisseria gonorrhoeae (strain ATCC 700825 / FA 1090)</name>
    <dbReference type="NCBI Taxonomy" id="242231"/>
    <lineage>
        <taxon>Bacteria</taxon>
        <taxon>Pseudomonadati</taxon>
        <taxon>Pseudomonadota</taxon>
        <taxon>Betaproteobacteria</taxon>
        <taxon>Neisseriales</taxon>
        <taxon>Neisseriaceae</taxon>
        <taxon>Neisseria</taxon>
    </lineage>
</organism>
<proteinExistence type="inferred from homology"/>
<feature type="chain" id="PRO_0000243307" description="Dephospho-CoA kinase">
    <location>
        <begin position="1"/>
        <end position="210"/>
    </location>
</feature>
<feature type="domain" description="DPCK" evidence="1">
    <location>
        <begin position="4"/>
        <end position="202"/>
    </location>
</feature>
<feature type="binding site" evidence="1">
    <location>
        <begin position="12"/>
        <end position="17"/>
    </location>
    <ligand>
        <name>ATP</name>
        <dbReference type="ChEBI" id="CHEBI:30616"/>
    </ligand>
</feature>
<reference key="1">
    <citation type="submission" date="2003-03" db="EMBL/GenBank/DDBJ databases">
        <title>The complete genome sequence of Neisseria gonorrhoeae.</title>
        <authorList>
            <person name="Lewis L.A."/>
            <person name="Gillaspy A.F."/>
            <person name="McLaughlin R.E."/>
            <person name="Gipson M."/>
            <person name="Ducey T.F."/>
            <person name="Ownbey T."/>
            <person name="Hartman K."/>
            <person name="Nydick C."/>
            <person name="Carson M.B."/>
            <person name="Vaughn J."/>
            <person name="Thomson C."/>
            <person name="Song L."/>
            <person name="Lin S."/>
            <person name="Yuan X."/>
            <person name="Najar F."/>
            <person name="Zhan M."/>
            <person name="Ren Q."/>
            <person name="Zhu H."/>
            <person name="Qi S."/>
            <person name="Kenton S.M."/>
            <person name="Lai H."/>
            <person name="White J.D."/>
            <person name="Clifton S."/>
            <person name="Roe B.A."/>
            <person name="Dyer D.W."/>
        </authorList>
    </citation>
    <scope>NUCLEOTIDE SEQUENCE [LARGE SCALE GENOMIC DNA]</scope>
    <source>
        <strain>ATCC 700825 / FA 1090</strain>
    </source>
</reference>
<comment type="function">
    <text evidence="1">Catalyzes the phosphorylation of the 3'-hydroxyl group of dephosphocoenzyme A to form coenzyme A.</text>
</comment>
<comment type="catalytic activity">
    <reaction evidence="1">
        <text>3'-dephospho-CoA + ATP = ADP + CoA + H(+)</text>
        <dbReference type="Rhea" id="RHEA:18245"/>
        <dbReference type="ChEBI" id="CHEBI:15378"/>
        <dbReference type="ChEBI" id="CHEBI:30616"/>
        <dbReference type="ChEBI" id="CHEBI:57287"/>
        <dbReference type="ChEBI" id="CHEBI:57328"/>
        <dbReference type="ChEBI" id="CHEBI:456216"/>
        <dbReference type="EC" id="2.7.1.24"/>
    </reaction>
</comment>
<comment type="pathway">
    <text evidence="1">Cofactor biosynthesis; coenzyme A biosynthesis; CoA from (R)-pantothenate: step 5/5.</text>
</comment>
<comment type="subcellular location">
    <subcellularLocation>
        <location evidence="1">Cytoplasm</location>
    </subcellularLocation>
</comment>
<comment type="similarity">
    <text evidence="1">Belongs to the CoaE family.</text>
</comment>
<accession>Q5F691</accession>
<evidence type="ECO:0000255" key="1">
    <source>
        <dbReference type="HAMAP-Rule" id="MF_00376"/>
    </source>
</evidence>
<gene>
    <name evidence="1" type="primary">coaE</name>
    <name type="ordered locus">NGO_1671</name>
</gene>
<sequence length="210" mass="22950">MTAWVGLTGGIGSGKSAAAQYFADLGVPRIDADAAAHSLTASDGIALPEIRRLFGDTVFDTQGLLRRDILRKEIFASPSRKALLESVMLPLIFSEIKKQQETFTDAVYGIVEIPLLTEKRQFISLIRRVLTISAPLEKRIGRVMARSGLTRGEVADIISHQASESERLLLADDVLLNDGSLKSLREKTMLLHAFYSGIFASKPTQGKHNG</sequence>
<name>COAE_NEIG1</name>